<gene>
    <name type="ordered locus">mll9388</name>
</gene>
<organism>
    <name type="scientific">Mesorhizobium japonicum (strain LMG 29417 / CECT 9101 / MAFF 303099)</name>
    <name type="common">Mesorhizobium loti (strain MAFF 303099)</name>
    <dbReference type="NCBI Taxonomy" id="266835"/>
    <lineage>
        <taxon>Bacteria</taxon>
        <taxon>Pseudomonadati</taxon>
        <taxon>Pseudomonadota</taxon>
        <taxon>Alphaproteobacteria</taxon>
        <taxon>Hyphomicrobiales</taxon>
        <taxon>Phyllobacteriaceae</taxon>
        <taxon>Mesorhizobium</taxon>
    </lineage>
</organism>
<protein>
    <recommendedName>
        <fullName evidence="1">UPF0261 protein mll9388</fullName>
    </recommendedName>
</protein>
<feature type="chain" id="PRO_0000220213" description="UPF0261 protein mll9388">
    <location>
        <begin position="1"/>
        <end position="402"/>
    </location>
</feature>
<evidence type="ECO:0000255" key="1">
    <source>
        <dbReference type="HAMAP-Rule" id="MF_00677"/>
    </source>
</evidence>
<evidence type="ECO:0000305" key="2"/>
<name>Y9388_RHILO</name>
<accession>Q981G1</accession>
<dbReference type="EMBL" id="BA000013">
    <property type="protein sequence ID" value="BAB54994.1"/>
    <property type="status" value="ALT_INIT"/>
    <property type="molecule type" value="Genomic_DNA"/>
</dbReference>
<dbReference type="RefSeq" id="WP_044552293.1">
    <property type="nucleotide sequence ID" value="NC_002679.1"/>
</dbReference>
<dbReference type="SMR" id="Q981G1"/>
<dbReference type="KEGG" id="mlo:mll9388"/>
<dbReference type="HOGENOM" id="CLU_036813_1_0_5"/>
<dbReference type="Proteomes" id="UP000000552">
    <property type="component" value="Plasmid pMLa"/>
</dbReference>
<dbReference type="CDD" id="cd15488">
    <property type="entry name" value="Tm-1-like"/>
    <property type="match status" value="1"/>
</dbReference>
<dbReference type="Gene3D" id="3.40.50.12030">
    <property type="entry name" value="Uncharacterised protein family UPF0261, NC domain"/>
    <property type="match status" value="1"/>
</dbReference>
<dbReference type="Gene3D" id="3.40.50.12020">
    <property type="entry name" value="Uncharacterised protein family UPF0261, NN domain"/>
    <property type="match status" value="1"/>
</dbReference>
<dbReference type="HAMAP" id="MF_00677">
    <property type="entry name" value="UPF0261"/>
    <property type="match status" value="1"/>
</dbReference>
<dbReference type="InterPro" id="IPR051353">
    <property type="entry name" value="Tobamovirus_resist_UPF0261"/>
</dbReference>
<dbReference type="InterPro" id="IPR008322">
    <property type="entry name" value="UPF0261"/>
</dbReference>
<dbReference type="InterPro" id="IPR056778">
    <property type="entry name" value="UPF0261_C"/>
</dbReference>
<dbReference type="InterPro" id="IPR044122">
    <property type="entry name" value="UPF0261_N"/>
</dbReference>
<dbReference type="NCBIfam" id="NF002673">
    <property type="entry name" value="PRK02399.1-1"/>
    <property type="match status" value="1"/>
</dbReference>
<dbReference type="NCBIfam" id="NF002674">
    <property type="entry name" value="PRK02399.1-2"/>
    <property type="match status" value="1"/>
</dbReference>
<dbReference type="PANTHER" id="PTHR31862">
    <property type="entry name" value="UPF0261 DOMAIN PROTEIN (AFU_ORTHOLOGUE AFUA_1G10120)"/>
    <property type="match status" value="1"/>
</dbReference>
<dbReference type="PANTHER" id="PTHR31862:SF1">
    <property type="entry name" value="UPF0261 DOMAIN PROTEIN (AFU_ORTHOLOGUE AFUA_1G10120)"/>
    <property type="match status" value="1"/>
</dbReference>
<dbReference type="Pfam" id="PF06792">
    <property type="entry name" value="UPF0261"/>
    <property type="match status" value="1"/>
</dbReference>
<dbReference type="Pfam" id="PF23189">
    <property type="entry name" value="UPF0261_C"/>
    <property type="match status" value="1"/>
</dbReference>
<dbReference type="PIRSF" id="PIRSF033271">
    <property type="entry name" value="UCP033271"/>
    <property type="match status" value="1"/>
</dbReference>
<reference key="1">
    <citation type="journal article" date="2000" name="DNA Res.">
        <title>Complete genome structure of the nitrogen-fixing symbiotic bacterium Mesorhizobium loti.</title>
        <authorList>
            <person name="Kaneko T."/>
            <person name="Nakamura Y."/>
            <person name="Sato S."/>
            <person name="Asamizu E."/>
            <person name="Kato T."/>
            <person name="Sasamoto S."/>
            <person name="Watanabe A."/>
            <person name="Idesawa K."/>
            <person name="Ishikawa A."/>
            <person name="Kawashima K."/>
            <person name="Kimura T."/>
            <person name="Kishida Y."/>
            <person name="Kiyokawa C."/>
            <person name="Kohara M."/>
            <person name="Matsumoto M."/>
            <person name="Matsuno A."/>
            <person name="Mochizuki Y."/>
            <person name="Nakayama S."/>
            <person name="Nakazaki N."/>
            <person name="Shimpo S."/>
            <person name="Sugimoto M."/>
            <person name="Takeuchi C."/>
            <person name="Yamada M."/>
            <person name="Tabata S."/>
        </authorList>
    </citation>
    <scope>NUCLEOTIDE SEQUENCE [LARGE SCALE GENOMIC DNA]</scope>
    <source>
        <strain>LMG 29417 / CECT 9101 / MAFF 303099</strain>
    </source>
</reference>
<geneLocation type="plasmid">
    <name>pMLa</name>
</geneLocation>
<keyword id="KW-0614">Plasmid</keyword>
<proteinExistence type="inferred from homology"/>
<sequence>MKIVYVVGTCDTKGSELRYLRDLIRDAGCDVVLVDVSVSEFHSEASDVDVQPAEVARCHPNPLKAEELKDRGKAVAAMSQALVEYIRSRPDVDGIIGAGGSGGTALIAPAMRALPIGVPKVLVSTVASGNVAPYVGPTDISMMYSVTDVSGLNRISRVVLANAAHSIAGMVLKQVGAAADERPAIGLTMFGVTTPCVQAVTRALEANFDCLVFHATGTGGQSFEKLADSGLLVGGIDVSTTEVCDYLVGGVFPCTPDRFGAFARTKLPYVGSCGALDMVNFGAMETVPSQFRSRRLHVHNPQVTLMRTNPEECSRIGEWIGERLNLCEGPVRFLIPELGVSAIDAPGQPFHDPEADAVLFAALERTLRCTDKRQLARVPLHINDPQFADLLVTNLKEAFREH</sequence>
<comment type="similarity">
    <text evidence="1">Belongs to the UPF0261 family.</text>
</comment>
<comment type="sequence caution" evidence="2">
    <conflict type="erroneous initiation">
        <sequence resource="EMBL-CDS" id="BAB54994"/>
    </conflict>
</comment>